<keyword id="KW-0963">Cytoplasm</keyword>
<keyword id="KW-0931">ER-Golgi transport</keyword>
<keyword id="KW-1185">Reference proteome</keyword>
<keyword id="KW-0813">Transport</keyword>
<accession>O74432</accession>
<protein>
    <recommendedName>
        <fullName>Golgi to ER traffic protein 4</fullName>
    </recommendedName>
</protein>
<feature type="chain" id="PRO_0000228106" description="Golgi to ER traffic protein 4">
    <location>
        <begin position="1"/>
        <end position="303"/>
    </location>
</feature>
<dbReference type="EMBL" id="CU329672">
    <property type="protein sequence ID" value="CAA20450.1"/>
    <property type="molecule type" value="Genomic_DNA"/>
</dbReference>
<dbReference type="PIR" id="T41056">
    <property type="entry name" value="T41056"/>
</dbReference>
<dbReference type="RefSeq" id="NP_587883.1">
    <property type="nucleotide sequence ID" value="NM_001022875.2"/>
</dbReference>
<dbReference type="SMR" id="O74432"/>
<dbReference type="BioGRID" id="275350">
    <property type="interactions" value="11"/>
</dbReference>
<dbReference type="FunCoup" id="O74432">
    <property type="interactions" value="591"/>
</dbReference>
<dbReference type="STRING" id="284812.O74432"/>
<dbReference type="iPTMnet" id="O74432"/>
<dbReference type="PaxDb" id="4896-SPCC1672.12c.1"/>
<dbReference type="EnsemblFungi" id="SPCC1672.12c.1">
    <property type="protein sequence ID" value="SPCC1672.12c.1:pep"/>
    <property type="gene ID" value="SPCC1672.12c"/>
</dbReference>
<dbReference type="GeneID" id="2538767"/>
<dbReference type="KEGG" id="spo:2538767"/>
<dbReference type="PomBase" id="SPCC1672.12c">
    <property type="gene designation" value="get4"/>
</dbReference>
<dbReference type="VEuPathDB" id="FungiDB:SPCC1672.12c"/>
<dbReference type="eggNOG" id="KOG3024">
    <property type="taxonomic scope" value="Eukaryota"/>
</dbReference>
<dbReference type="HOGENOM" id="CLU_046061_0_2_1"/>
<dbReference type="InParanoid" id="O74432"/>
<dbReference type="OMA" id="LMDMMGM"/>
<dbReference type="PhylomeDB" id="O74432"/>
<dbReference type="PRO" id="PR:O74432"/>
<dbReference type="Proteomes" id="UP000002485">
    <property type="component" value="Chromosome III"/>
</dbReference>
<dbReference type="GO" id="GO:0005829">
    <property type="term" value="C:cytosol"/>
    <property type="evidence" value="ECO:0007005"/>
    <property type="project" value="PomBase"/>
</dbReference>
<dbReference type="GO" id="GO:0005634">
    <property type="term" value="C:nucleus"/>
    <property type="evidence" value="ECO:0007005"/>
    <property type="project" value="PomBase"/>
</dbReference>
<dbReference type="GO" id="GO:0072380">
    <property type="term" value="C:TRC complex"/>
    <property type="evidence" value="ECO:0000266"/>
    <property type="project" value="PomBase"/>
</dbReference>
<dbReference type="GO" id="GO:0045048">
    <property type="term" value="P:protein insertion into ER membrane"/>
    <property type="evidence" value="ECO:0000318"/>
    <property type="project" value="GO_Central"/>
</dbReference>
<dbReference type="GO" id="GO:0016192">
    <property type="term" value="P:vesicle-mediated transport"/>
    <property type="evidence" value="ECO:0007669"/>
    <property type="project" value="UniProtKB-KW"/>
</dbReference>
<dbReference type="Gene3D" id="1.25.40.10">
    <property type="entry name" value="Tetratricopeptide repeat domain"/>
    <property type="match status" value="1"/>
</dbReference>
<dbReference type="InterPro" id="IPR007317">
    <property type="entry name" value="GET4"/>
</dbReference>
<dbReference type="InterPro" id="IPR011990">
    <property type="entry name" value="TPR-like_helical_dom_sf"/>
</dbReference>
<dbReference type="PANTHER" id="PTHR12875">
    <property type="entry name" value="GOLGI TO ER TRAFFIC PROTEIN 4 HOMOLOG"/>
    <property type="match status" value="1"/>
</dbReference>
<dbReference type="PANTHER" id="PTHR12875:SF0">
    <property type="entry name" value="GOLGI TO ER TRAFFIC PROTEIN 4 HOMOLOG"/>
    <property type="match status" value="1"/>
</dbReference>
<dbReference type="Pfam" id="PF04190">
    <property type="entry name" value="GET4"/>
    <property type="match status" value="1"/>
</dbReference>
<gene>
    <name type="primary">get4</name>
    <name type="ORF">SPCC1672.12c</name>
</gene>
<evidence type="ECO:0000250" key="1"/>
<evidence type="ECO:0000269" key="2">
    <source>
    </source>
</evidence>
<evidence type="ECO:0000305" key="3"/>
<name>GET4_SCHPO</name>
<comment type="function">
    <text evidence="1">May play a role in insertion of tail-anchored proteins into the endoplasmic reticulum membrane.</text>
</comment>
<comment type="subcellular location">
    <subcellularLocation>
        <location evidence="2">Cytoplasm</location>
    </subcellularLocation>
</comment>
<comment type="similarity">
    <text evidence="3">Belongs to the GET4 family.</text>
</comment>
<reference key="1">
    <citation type="journal article" date="2002" name="Nature">
        <title>The genome sequence of Schizosaccharomyces pombe.</title>
        <authorList>
            <person name="Wood V."/>
            <person name="Gwilliam R."/>
            <person name="Rajandream M.A."/>
            <person name="Lyne M.H."/>
            <person name="Lyne R."/>
            <person name="Stewart A."/>
            <person name="Sgouros J.G."/>
            <person name="Peat N."/>
            <person name="Hayles J."/>
            <person name="Baker S.G."/>
            <person name="Basham D."/>
            <person name="Bowman S."/>
            <person name="Brooks K."/>
            <person name="Brown D."/>
            <person name="Brown S."/>
            <person name="Chillingworth T."/>
            <person name="Churcher C.M."/>
            <person name="Collins M."/>
            <person name="Connor R."/>
            <person name="Cronin A."/>
            <person name="Davis P."/>
            <person name="Feltwell T."/>
            <person name="Fraser A."/>
            <person name="Gentles S."/>
            <person name="Goble A."/>
            <person name="Hamlin N."/>
            <person name="Harris D.E."/>
            <person name="Hidalgo J."/>
            <person name="Hodgson G."/>
            <person name="Holroyd S."/>
            <person name="Hornsby T."/>
            <person name="Howarth S."/>
            <person name="Huckle E.J."/>
            <person name="Hunt S."/>
            <person name="Jagels K."/>
            <person name="James K.D."/>
            <person name="Jones L."/>
            <person name="Jones M."/>
            <person name="Leather S."/>
            <person name="McDonald S."/>
            <person name="McLean J."/>
            <person name="Mooney P."/>
            <person name="Moule S."/>
            <person name="Mungall K.L."/>
            <person name="Murphy L.D."/>
            <person name="Niblett D."/>
            <person name="Odell C."/>
            <person name="Oliver K."/>
            <person name="O'Neil S."/>
            <person name="Pearson D."/>
            <person name="Quail M.A."/>
            <person name="Rabbinowitsch E."/>
            <person name="Rutherford K.M."/>
            <person name="Rutter S."/>
            <person name="Saunders D."/>
            <person name="Seeger K."/>
            <person name="Sharp S."/>
            <person name="Skelton J."/>
            <person name="Simmonds M.N."/>
            <person name="Squares R."/>
            <person name="Squares S."/>
            <person name="Stevens K."/>
            <person name="Taylor K."/>
            <person name="Taylor R.G."/>
            <person name="Tivey A."/>
            <person name="Walsh S.V."/>
            <person name="Warren T."/>
            <person name="Whitehead S."/>
            <person name="Woodward J.R."/>
            <person name="Volckaert G."/>
            <person name="Aert R."/>
            <person name="Robben J."/>
            <person name="Grymonprez B."/>
            <person name="Weltjens I."/>
            <person name="Vanstreels E."/>
            <person name="Rieger M."/>
            <person name="Schaefer M."/>
            <person name="Mueller-Auer S."/>
            <person name="Gabel C."/>
            <person name="Fuchs M."/>
            <person name="Duesterhoeft A."/>
            <person name="Fritzc C."/>
            <person name="Holzer E."/>
            <person name="Moestl D."/>
            <person name="Hilbert H."/>
            <person name="Borzym K."/>
            <person name="Langer I."/>
            <person name="Beck A."/>
            <person name="Lehrach H."/>
            <person name="Reinhardt R."/>
            <person name="Pohl T.M."/>
            <person name="Eger P."/>
            <person name="Zimmermann W."/>
            <person name="Wedler H."/>
            <person name="Wambutt R."/>
            <person name="Purnelle B."/>
            <person name="Goffeau A."/>
            <person name="Cadieu E."/>
            <person name="Dreano S."/>
            <person name="Gloux S."/>
            <person name="Lelaure V."/>
            <person name="Mottier S."/>
            <person name="Galibert F."/>
            <person name="Aves S.J."/>
            <person name="Xiang Z."/>
            <person name="Hunt C."/>
            <person name="Moore K."/>
            <person name="Hurst S.M."/>
            <person name="Lucas M."/>
            <person name="Rochet M."/>
            <person name="Gaillardin C."/>
            <person name="Tallada V.A."/>
            <person name="Garzon A."/>
            <person name="Thode G."/>
            <person name="Daga R.R."/>
            <person name="Cruzado L."/>
            <person name="Jimenez J."/>
            <person name="Sanchez M."/>
            <person name="del Rey F."/>
            <person name="Benito J."/>
            <person name="Dominguez A."/>
            <person name="Revuelta J.L."/>
            <person name="Moreno S."/>
            <person name="Armstrong J."/>
            <person name="Forsburg S.L."/>
            <person name="Cerutti L."/>
            <person name="Lowe T."/>
            <person name="McCombie W.R."/>
            <person name="Paulsen I."/>
            <person name="Potashkin J."/>
            <person name="Shpakovski G.V."/>
            <person name="Ussery D."/>
            <person name="Barrell B.G."/>
            <person name="Nurse P."/>
        </authorList>
    </citation>
    <scope>NUCLEOTIDE SEQUENCE [LARGE SCALE GENOMIC DNA]</scope>
    <source>
        <strain>972 / ATCC 24843</strain>
    </source>
</reference>
<reference key="2">
    <citation type="journal article" date="2006" name="Nat. Biotechnol.">
        <title>ORFeome cloning and global analysis of protein localization in the fission yeast Schizosaccharomyces pombe.</title>
        <authorList>
            <person name="Matsuyama A."/>
            <person name="Arai R."/>
            <person name="Yashiroda Y."/>
            <person name="Shirai A."/>
            <person name="Kamata A."/>
            <person name="Sekido S."/>
            <person name="Kobayashi Y."/>
            <person name="Hashimoto A."/>
            <person name="Hamamoto M."/>
            <person name="Hiraoka Y."/>
            <person name="Horinouchi S."/>
            <person name="Yoshida M."/>
        </authorList>
    </citation>
    <scope>SUBCELLULAR LOCATION [LARGE SCALE ANALYSIS]</scope>
</reference>
<proteinExistence type="inferred from homology"/>
<sequence length="303" mass="34352">MDAKIKRAEGRLREDPYEGHQMLRTLVNRQVKAKKHDDAVALLYSGAKTLFEIEQTGSAADLAIYMLDVYEKASYAASLDNKARALTLLGLFPAEEGARKQYVKRLLEWSKSAGPQGDKDVHFAVATMFVKWKEPASAEKHFVLGNEKSARAYGETMYYWFTSDSSISPDTFAGRPVLNYLLAENLISAWNSLETFTKHFTKSNAPDVENMSFDGKDFPVFKEYPQMNFLHLLIFTAYRKDKETYLSLVQKYPKKQDWEAALAKIEEIYFGIRPVSNQPNILANLMSSLFSGPPAATNQLDLE</sequence>
<organism>
    <name type="scientific">Schizosaccharomyces pombe (strain 972 / ATCC 24843)</name>
    <name type="common">Fission yeast</name>
    <dbReference type="NCBI Taxonomy" id="284812"/>
    <lineage>
        <taxon>Eukaryota</taxon>
        <taxon>Fungi</taxon>
        <taxon>Dikarya</taxon>
        <taxon>Ascomycota</taxon>
        <taxon>Taphrinomycotina</taxon>
        <taxon>Schizosaccharomycetes</taxon>
        <taxon>Schizosaccharomycetales</taxon>
        <taxon>Schizosaccharomycetaceae</taxon>
        <taxon>Schizosaccharomyces</taxon>
    </lineage>
</organism>